<reference key="1">
    <citation type="submission" date="1994-09" db="EMBL/GenBank/DDBJ databases">
        <authorList>
            <person name="Smith D.R."/>
            <person name="Robison K."/>
        </authorList>
    </citation>
    <scope>NUCLEOTIDE SEQUENCE [GENOMIC DNA]</scope>
</reference>
<reference key="2">
    <citation type="journal article" date="2001" name="Nature">
        <title>Massive gene decay in the leprosy bacillus.</title>
        <authorList>
            <person name="Cole S.T."/>
            <person name="Eiglmeier K."/>
            <person name="Parkhill J."/>
            <person name="James K.D."/>
            <person name="Thomson N.R."/>
            <person name="Wheeler P.R."/>
            <person name="Honore N."/>
            <person name="Garnier T."/>
            <person name="Churcher C.M."/>
            <person name="Harris D.E."/>
            <person name="Mungall K.L."/>
            <person name="Basham D."/>
            <person name="Brown D."/>
            <person name="Chillingworth T."/>
            <person name="Connor R."/>
            <person name="Davies R.M."/>
            <person name="Devlin K."/>
            <person name="Duthoy S."/>
            <person name="Feltwell T."/>
            <person name="Fraser A."/>
            <person name="Hamlin N."/>
            <person name="Holroyd S."/>
            <person name="Hornsby T."/>
            <person name="Jagels K."/>
            <person name="Lacroix C."/>
            <person name="Maclean J."/>
            <person name="Moule S."/>
            <person name="Murphy L.D."/>
            <person name="Oliver K."/>
            <person name="Quail M.A."/>
            <person name="Rajandream M.A."/>
            <person name="Rutherford K.M."/>
            <person name="Rutter S."/>
            <person name="Seeger K."/>
            <person name="Simon S."/>
            <person name="Simmonds M."/>
            <person name="Skelton J."/>
            <person name="Squares R."/>
            <person name="Squares S."/>
            <person name="Stevens K."/>
            <person name="Taylor K."/>
            <person name="Whitehead S."/>
            <person name="Woodward J.R."/>
            <person name="Barrell B.G."/>
        </authorList>
    </citation>
    <scope>NUCLEOTIDE SEQUENCE [LARGE SCALE GENOMIC DNA]</scope>
    <source>
        <strain>TN</strain>
    </source>
</reference>
<comment type="similarity">
    <text evidence="2">Belongs to the class I-like SAM-binding methyltransferase superfamily. Cation-dependent O-methyltransferase family.</text>
</comment>
<comment type="sequence caution" evidence="3">
    <conflict type="frameshift">
        <sequence resource="EMBL-CDS" id="AAA62911"/>
    </conflict>
</comment>
<keyword id="KW-0489">Methyltransferase</keyword>
<keyword id="KW-1185">Reference proteome</keyword>
<keyword id="KW-0949">S-adenosyl-L-methionine</keyword>
<keyword id="KW-0808">Transferase</keyword>
<feature type="chain" id="PRO_0000380097" description="Putative O-methyltransferase ML1075">
    <location>
        <begin position="1"/>
        <end position="224"/>
    </location>
</feature>
<feature type="binding site" evidence="2">
    <location>
        <position position="51"/>
    </location>
    <ligand>
        <name>S-adenosyl-L-methionine</name>
        <dbReference type="ChEBI" id="CHEBI:59789"/>
    </ligand>
</feature>
<feature type="binding site" evidence="2">
    <location>
        <position position="73"/>
    </location>
    <ligand>
        <name>S-adenosyl-L-methionine</name>
        <dbReference type="ChEBI" id="CHEBI:59789"/>
    </ligand>
</feature>
<feature type="binding site" evidence="2">
    <location>
        <begin position="75"/>
        <end position="76"/>
    </location>
    <ligand>
        <name>S-adenosyl-L-methionine</name>
        <dbReference type="ChEBI" id="CHEBI:59789"/>
    </ligand>
</feature>
<feature type="binding site" evidence="2">
    <location>
        <position position="81"/>
    </location>
    <ligand>
        <name>S-adenosyl-L-methionine</name>
        <dbReference type="ChEBI" id="CHEBI:59789"/>
    </ligand>
</feature>
<feature type="binding site" evidence="2">
    <location>
        <position position="99"/>
    </location>
    <ligand>
        <name>S-adenosyl-L-methionine</name>
        <dbReference type="ChEBI" id="CHEBI:59789"/>
    </ligand>
</feature>
<feature type="binding site" evidence="2">
    <location>
        <position position="100"/>
    </location>
    <ligand>
        <name>S-adenosyl-L-methionine</name>
        <dbReference type="ChEBI" id="CHEBI:59789"/>
    </ligand>
</feature>
<feature type="binding site" evidence="1">
    <location>
        <position position="147"/>
    </location>
    <ligand>
        <name>substrate</name>
    </ligand>
</feature>
<feature type="binding site" evidence="2">
    <location>
        <position position="149"/>
    </location>
    <ligand>
        <name>S-adenosyl-L-methionine</name>
        <dbReference type="ChEBI" id="CHEBI:59789"/>
    </ligand>
</feature>
<protein>
    <recommendedName>
        <fullName>Putative O-methyltransferase ML1075</fullName>
        <ecNumber>2.1.1.-</ecNumber>
    </recommendedName>
</protein>
<organism>
    <name type="scientific">Mycobacterium leprae (strain TN)</name>
    <dbReference type="NCBI Taxonomy" id="272631"/>
    <lineage>
        <taxon>Bacteria</taxon>
        <taxon>Bacillati</taxon>
        <taxon>Actinomycetota</taxon>
        <taxon>Actinomycetes</taxon>
        <taxon>Mycobacteriales</taxon>
        <taxon>Mycobacteriaceae</taxon>
        <taxon>Mycobacterium</taxon>
    </lineage>
</organism>
<name>Y1075_MYCLE</name>
<dbReference type="EC" id="2.1.1.-"/>
<dbReference type="EMBL" id="U15180">
    <property type="protein sequence ID" value="AAA62911.1"/>
    <property type="status" value="ALT_FRAME"/>
    <property type="molecule type" value="Genomic_DNA"/>
</dbReference>
<dbReference type="EMBL" id="AL583920">
    <property type="protein sequence ID" value="CAC31456.1"/>
    <property type="molecule type" value="Genomic_DNA"/>
</dbReference>
<dbReference type="PIR" id="E87043">
    <property type="entry name" value="E87043"/>
</dbReference>
<dbReference type="PIR" id="T45194">
    <property type="entry name" value="T45194"/>
</dbReference>
<dbReference type="RefSeq" id="NP_301788.1">
    <property type="nucleotide sequence ID" value="NC_002677.1"/>
</dbReference>
<dbReference type="RefSeq" id="WP_010908112.1">
    <property type="nucleotide sequence ID" value="NC_002677.1"/>
</dbReference>
<dbReference type="SMR" id="Q9CCA7"/>
<dbReference type="STRING" id="272631.gene:17574901"/>
<dbReference type="KEGG" id="mle:ML1075"/>
<dbReference type="PATRIC" id="fig|272631.5.peg.1928"/>
<dbReference type="Leproma" id="ML1075"/>
<dbReference type="eggNOG" id="COG4122">
    <property type="taxonomic scope" value="Bacteria"/>
</dbReference>
<dbReference type="HOGENOM" id="CLU_067676_2_0_11"/>
<dbReference type="OrthoDB" id="4774874at2"/>
<dbReference type="Proteomes" id="UP000000806">
    <property type="component" value="Chromosome"/>
</dbReference>
<dbReference type="GO" id="GO:0008171">
    <property type="term" value="F:O-methyltransferase activity"/>
    <property type="evidence" value="ECO:0007669"/>
    <property type="project" value="InterPro"/>
</dbReference>
<dbReference type="GO" id="GO:0008757">
    <property type="term" value="F:S-adenosylmethionine-dependent methyltransferase activity"/>
    <property type="evidence" value="ECO:0007669"/>
    <property type="project" value="TreeGrafter"/>
</dbReference>
<dbReference type="GO" id="GO:0032259">
    <property type="term" value="P:methylation"/>
    <property type="evidence" value="ECO:0007669"/>
    <property type="project" value="UniProtKB-KW"/>
</dbReference>
<dbReference type="CDD" id="cd02440">
    <property type="entry name" value="AdoMet_MTases"/>
    <property type="match status" value="1"/>
</dbReference>
<dbReference type="Gene3D" id="3.40.50.150">
    <property type="entry name" value="Vaccinia Virus protein VP39"/>
    <property type="match status" value="1"/>
</dbReference>
<dbReference type="InterPro" id="IPR050362">
    <property type="entry name" value="Cation-dep_OMT"/>
</dbReference>
<dbReference type="InterPro" id="IPR029063">
    <property type="entry name" value="SAM-dependent_MTases_sf"/>
</dbReference>
<dbReference type="InterPro" id="IPR002935">
    <property type="entry name" value="SAM_O-MeTrfase"/>
</dbReference>
<dbReference type="PANTHER" id="PTHR10509:SF85">
    <property type="entry name" value="O-METHYLTRANSFERASE RV1220C-RELATED"/>
    <property type="match status" value="1"/>
</dbReference>
<dbReference type="PANTHER" id="PTHR10509">
    <property type="entry name" value="O-METHYLTRANSFERASE-RELATED"/>
    <property type="match status" value="1"/>
</dbReference>
<dbReference type="Pfam" id="PF01596">
    <property type="entry name" value="Methyltransf_3"/>
    <property type="match status" value="1"/>
</dbReference>
<dbReference type="SUPFAM" id="SSF53335">
    <property type="entry name" value="S-adenosyl-L-methionine-dependent methyltransferases"/>
    <property type="match status" value="1"/>
</dbReference>
<dbReference type="PROSITE" id="PS51682">
    <property type="entry name" value="SAM_OMT_I"/>
    <property type="match status" value="1"/>
</dbReference>
<gene>
    <name type="ordered locus">ML1075</name>
</gene>
<proteinExistence type="inferred from homology"/>
<sequence>MYGTGNNAVTPDQAAASRADSLFAHAEGSISEDAILASARERSEEIGARAVTPAVGALLSLLTKLSGGKAVAEVGTGAGVSGLWLLSGMSYDGVLTTIDIEPEYLRLAKQAFSEAGIGPSRTRLISGRGQDVLTRLADESYDLVFIDADPIDQPAYVVEGVRLLRSCGIIVVHRAALGGRAGDPAARDAEVTAVREAARLIAENERLTPALVPLGDGLLAAVRE</sequence>
<evidence type="ECO:0000250" key="1"/>
<evidence type="ECO:0000255" key="2">
    <source>
        <dbReference type="PROSITE-ProRule" id="PRU01019"/>
    </source>
</evidence>
<evidence type="ECO:0000305" key="3"/>
<accession>Q9CCA7</accession>
<accession>Q49969</accession>